<name>GRXC6_ORYSJ</name>
<organism>
    <name type="scientific">Oryza sativa subsp. japonica</name>
    <name type="common">Rice</name>
    <dbReference type="NCBI Taxonomy" id="39947"/>
    <lineage>
        <taxon>Eukaryota</taxon>
        <taxon>Viridiplantae</taxon>
        <taxon>Streptophyta</taxon>
        <taxon>Embryophyta</taxon>
        <taxon>Tracheophyta</taxon>
        <taxon>Spermatophyta</taxon>
        <taxon>Magnoliopsida</taxon>
        <taxon>Liliopsida</taxon>
        <taxon>Poales</taxon>
        <taxon>Poaceae</taxon>
        <taxon>BOP clade</taxon>
        <taxon>Oryzoideae</taxon>
        <taxon>Oryzeae</taxon>
        <taxon>Oryzinae</taxon>
        <taxon>Oryza</taxon>
        <taxon>Oryza sativa</taxon>
    </lineage>
</organism>
<sequence length="112" mass="11774">MALAKAKETVASAPVVVYSKSYCPFCVRVKKLFEQLGATFKAIELDGESDGSELQSALAEWTGQRTVPNVFINGKHIGGCDDTLALNNEGKLVPLLTEAGAIASSAKTTITA</sequence>
<accession>P55142</accession>
<accession>A3AVF9</accession>
<accession>O04273</accession>
<accession>Q0JBV3</accession>
<accession>Q7FA28</accession>
<reference key="1">
    <citation type="journal article" date="1994" name="FEBS Lett.">
        <title>Cloning and sequence analysis of a cDNA encoding rice glutaredoxin.</title>
        <authorList>
            <person name="Minakuchi K."/>
            <person name="Yabushita T."/>
            <person name="Masumura T."/>
            <person name="Ichihara K."/>
            <person name="Tanaka K."/>
        </authorList>
    </citation>
    <scope>NUCLEOTIDE SEQUENCE [MRNA]</scope>
    <scope>FUNCTION</scope>
    <scope>TISSUE SPECIFICITY</scope>
    <source>
        <tissue>Aleurone</tissue>
    </source>
</reference>
<reference key="2">
    <citation type="journal article" date="1997" name="Gene">
        <title>Structure of the rice glutaredoxin (thioltransferase) gene.</title>
        <authorList>
            <person name="Sha S."/>
            <person name="Yabushita T."/>
            <person name="Minakuchi K."/>
            <person name="Masumura T."/>
            <person name="Tanaka K."/>
        </authorList>
    </citation>
    <scope>NUCLEOTIDE SEQUENCE [GENOMIC DNA]</scope>
    <source>
        <strain>cv. Nipponbare</strain>
    </source>
</reference>
<reference key="3">
    <citation type="journal article" date="2002" name="Nature">
        <title>Sequence and analysis of rice chromosome 4.</title>
        <authorList>
            <person name="Feng Q."/>
            <person name="Zhang Y."/>
            <person name="Hao P."/>
            <person name="Wang S."/>
            <person name="Fu G."/>
            <person name="Huang Y."/>
            <person name="Li Y."/>
            <person name="Zhu J."/>
            <person name="Liu Y."/>
            <person name="Hu X."/>
            <person name="Jia P."/>
            <person name="Zhang Y."/>
            <person name="Zhao Q."/>
            <person name="Ying K."/>
            <person name="Yu S."/>
            <person name="Tang Y."/>
            <person name="Weng Q."/>
            <person name="Zhang L."/>
            <person name="Lu Y."/>
            <person name="Mu J."/>
            <person name="Lu Y."/>
            <person name="Zhang L.S."/>
            <person name="Yu Z."/>
            <person name="Fan D."/>
            <person name="Liu X."/>
            <person name="Lu T."/>
            <person name="Li C."/>
            <person name="Wu Y."/>
            <person name="Sun T."/>
            <person name="Lei H."/>
            <person name="Li T."/>
            <person name="Hu H."/>
            <person name="Guan J."/>
            <person name="Wu M."/>
            <person name="Zhang R."/>
            <person name="Zhou B."/>
            <person name="Chen Z."/>
            <person name="Chen L."/>
            <person name="Jin Z."/>
            <person name="Wang R."/>
            <person name="Yin H."/>
            <person name="Cai Z."/>
            <person name="Ren S."/>
            <person name="Lv G."/>
            <person name="Gu W."/>
            <person name="Zhu G."/>
            <person name="Tu Y."/>
            <person name="Jia J."/>
            <person name="Zhang Y."/>
            <person name="Chen J."/>
            <person name="Kang H."/>
            <person name="Chen X."/>
            <person name="Shao C."/>
            <person name="Sun Y."/>
            <person name="Hu Q."/>
            <person name="Zhang X."/>
            <person name="Zhang W."/>
            <person name="Wang L."/>
            <person name="Ding C."/>
            <person name="Sheng H."/>
            <person name="Gu J."/>
            <person name="Chen S."/>
            <person name="Ni L."/>
            <person name="Zhu F."/>
            <person name="Chen W."/>
            <person name="Lan L."/>
            <person name="Lai Y."/>
            <person name="Cheng Z."/>
            <person name="Gu M."/>
            <person name="Jiang J."/>
            <person name="Li J."/>
            <person name="Hong G."/>
            <person name="Xue Y."/>
            <person name="Han B."/>
        </authorList>
    </citation>
    <scope>NUCLEOTIDE SEQUENCE [LARGE SCALE GENOMIC DNA]</scope>
    <source>
        <strain>cv. Nipponbare</strain>
    </source>
</reference>
<reference key="4">
    <citation type="journal article" date="2005" name="Nature">
        <title>The map-based sequence of the rice genome.</title>
        <authorList>
            <consortium name="International rice genome sequencing project (IRGSP)"/>
        </authorList>
    </citation>
    <scope>NUCLEOTIDE SEQUENCE [LARGE SCALE GENOMIC DNA]</scope>
    <source>
        <strain>cv. Nipponbare</strain>
    </source>
</reference>
<reference key="5">
    <citation type="journal article" date="2008" name="Nucleic Acids Res.">
        <title>The rice annotation project database (RAP-DB): 2008 update.</title>
        <authorList>
            <consortium name="The rice annotation project (RAP)"/>
        </authorList>
    </citation>
    <scope>GENOME REANNOTATION</scope>
    <source>
        <strain>cv. Nipponbare</strain>
    </source>
</reference>
<reference key="6">
    <citation type="journal article" date="2013" name="Rice">
        <title>Improvement of the Oryza sativa Nipponbare reference genome using next generation sequence and optical map data.</title>
        <authorList>
            <person name="Kawahara Y."/>
            <person name="de la Bastide M."/>
            <person name="Hamilton J.P."/>
            <person name="Kanamori H."/>
            <person name="McCombie W.R."/>
            <person name="Ouyang S."/>
            <person name="Schwartz D.C."/>
            <person name="Tanaka T."/>
            <person name="Wu J."/>
            <person name="Zhou S."/>
            <person name="Childs K.L."/>
            <person name="Davidson R.M."/>
            <person name="Lin H."/>
            <person name="Quesada-Ocampo L."/>
            <person name="Vaillancourt B."/>
            <person name="Sakai H."/>
            <person name="Lee S.S."/>
            <person name="Kim J."/>
            <person name="Numa H."/>
            <person name="Itoh T."/>
            <person name="Buell C.R."/>
            <person name="Matsumoto T."/>
        </authorList>
    </citation>
    <scope>GENOME REANNOTATION</scope>
    <source>
        <strain>cv. Nipponbare</strain>
    </source>
</reference>
<reference key="7">
    <citation type="journal article" date="2005" name="PLoS Biol.">
        <title>The genomes of Oryza sativa: a history of duplications.</title>
        <authorList>
            <person name="Yu J."/>
            <person name="Wang J."/>
            <person name="Lin W."/>
            <person name="Li S."/>
            <person name="Li H."/>
            <person name="Zhou J."/>
            <person name="Ni P."/>
            <person name="Dong W."/>
            <person name="Hu S."/>
            <person name="Zeng C."/>
            <person name="Zhang J."/>
            <person name="Zhang Y."/>
            <person name="Li R."/>
            <person name="Xu Z."/>
            <person name="Li S."/>
            <person name="Li X."/>
            <person name="Zheng H."/>
            <person name="Cong L."/>
            <person name="Lin L."/>
            <person name="Yin J."/>
            <person name="Geng J."/>
            <person name="Li G."/>
            <person name="Shi J."/>
            <person name="Liu J."/>
            <person name="Lv H."/>
            <person name="Li J."/>
            <person name="Wang J."/>
            <person name="Deng Y."/>
            <person name="Ran L."/>
            <person name="Shi X."/>
            <person name="Wang X."/>
            <person name="Wu Q."/>
            <person name="Li C."/>
            <person name="Ren X."/>
            <person name="Wang J."/>
            <person name="Wang X."/>
            <person name="Li D."/>
            <person name="Liu D."/>
            <person name="Zhang X."/>
            <person name="Ji Z."/>
            <person name="Zhao W."/>
            <person name="Sun Y."/>
            <person name="Zhang Z."/>
            <person name="Bao J."/>
            <person name="Han Y."/>
            <person name="Dong L."/>
            <person name="Ji J."/>
            <person name="Chen P."/>
            <person name="Wu S."/>
            <person name="Liu J."/>
            <person name="Xiao Y."/>
            <person name="Bu D."/>
            <person name="Tan J."/>
            <person name="Yang L."/>
            <person name="Ye C."/>
            <person name="Zhang J."/>
            <person name="Xu J."/>
            <person name="Zhou Y."/>
            <person name="Yu Y."/>
            <person name="Zhang B."/>
            <person name="Zhuang S."/>
            <person name="Wei H."/>
            <person name="Liu B."/>
            <person name="Lei M."/>
            <person name="Yu H."/>
            <person name="Li Y."/>
            <person name="Xu H."/>
            <person name="Wei S."/>
            <person name="He X."/>
            <person name="Fang L."/>
            <person name="Zhang Z."/>
            <person name="Zhang Y."/>
            <person name="Huang X."/>
            <person name="Su Z."/>
            <person name="Tong W."/>
            <person name="Li J."/>
            <person name="Tong Z."/>
            <person name="Li S."/>
            <person name="Ye J."/>
            <person name="Wang L."/>
            <person name="Fang L."/>
            <person name="Lei T."/>
            <person name="Chen C.-S."/>
            <person name="Chen H.-C."/>
            <person name="Xu Z."/>
            <person name="Li H."/>
            <person name="Huang H."/>
            <person name="Zhang F."/>
            <person name="Xu H."/>
            <person name="Li N."/>
            <person name="Zhao C."/>
            <person name="Li S."/>
            <person name="Dong L."/>
            <person name="Huang Y."/>
            <person name="Li L."/>
            <person name="Xi Y."/>
            <person name="Qi Q."/>
            <person name="Li W."/>
            <person name="Zhang B."/>
            <person name="Hu W."/>
            <person name="Zhang Y."/>
            <person name="Tian X."/>
            <person name="Jiao Y."/>
            <person name="Liang X."/>
            <person name="Jin J."/>
            <person name="Gao L."/>
            <person name="Zheng W."/>
            <person name="Hao B."/>
            <person name="Liu S.-M."/>
            <person name="Wang W."/>
            <person name="Yuan L."/>
            <person name="Cao M."/>
            <person name="McDermott J."/>
            <person name="Samudrala R."/>
            <person name="Wang J."/>
            <person name="Wong G.K.-S."/>
            <person name="Yang H."/>
        </authorList>
    </citation>
    <scope>NUCLEOTIDE SEQUENCE [LARGE SCALE GENOMIC DNA]</scope>
    <source>
        <strain>cv. Nipponbare</strain>
    </source>
</reference>
<reference key="8">
    <citation type="journal article" date="1997" name="J. Biochem.">
        <title>Purification and characterization of glutaredoxin (thioltransferase) from rice (Oryza sativa L.).</title>
        <authorList>
            <person name="Sha S."/>
            <person name="Minakuchi K."/>
            <person name="Higaki N."/>
            <person name="Sato K."/>
            <person name="Ohtsuki K."/>
            <person name="Kurata A."/>
            <person name="Yoshikawa H."/>
            <person name="Kotaru M."/>
            <person name="Masumura T."/>
            <person name="Ichihara K."/>
            <person name="Tanaka K."/>
        </authorList>
    </citation>
    <scope>PROTEIN SEQUENCE OF 8-106</scope>
    <scope>CHARACTERIZATION</scope>
    <source>
        <strain>cv. Nipponbare</strain>
    </source>
</reference>
<reference key="9">
    <citation type="journal article" date="2002" name="Biochem. Biophys. Res. Commun.">
        <title>GSH-dependent peroxidase activity of the rice (Oryza sativa) glutaredoxin, a thioltransferase.</title>
        <authorList>
            <person name="Lee K.O."/>
            <person name="Lee J.R."/>
            <person name="Yoo J.Y."/>
            <person name="Jang H.H."/>
            <person name="Moon J.C."/>
            <person name="Jung B.G."/>
            <person name="Chi Y.H."/>
            <person name="Park S.K."/>
            <person name="Lee S.S."/>
            <person name="Lim C.O."/>
            <person name="Yun D.-J."/>
            <person name="Cho M.J."/>
            <person name="Lee S.Y."/>
        </authorList>
    </citation>
    <scope>FUNCTION</scope>
    <scope>BIOPHYSICOCHEMICAL PROPERTIES</scope>
    <scope>MUTAGENESIS OF CYS-23</scope>
</reference>
<reference key="10">
    <citation type="journal article" date="2006" name="J. Exp. Bot.">
        <title>Genome-wide analysis of plant glutaredoxin systems.</title>
        <authorList>
            <person name="Rouhier N."/>
            <person name="Couturier J."/>
            <person name="Jacquot J.-P."/>
        </authorList>
    </citation>
    <scope>GENE FAMILY</scope>
</reference>
<feature type="chain" id="PRO_0000141607" description="Glutaredoxin-C6">
    <location>
        <begin position="1"/>
        <end position="112"/>
    </location>
</feature>
<feature type="domain" description="Glutaredoxin" evidence="2">
    <location>
        <begin position="3"/>
        <end position="103"/>
    </location>
</feature>
<feature type="disulfide bond" description="Redox-active" evidence="1">
    <location>
        <begin position="23"/>
        <end position="26"/>
    </location>
</feature>
<feature type="mutagenesis site" description="Loss of thioltransferase and GSH-dependent peroxidase activities." evidence="3">
    <original>C</original>
    <variation>S</variation>
    <location>
        <position position="23"/>
    </location>
</feature>
<feature type="sequence conflict" description="In Ref. 1; CAA54397." evidence="5" ref="1">
    <original>E</original>
    <variation>G</variation>
    <location>
        <position position="34"/>
    </location>
</feature>
<dbReference type="EMBL" id="X77150">
    <property type="protein sequence ID" value="CAA54397.1"/>
    <property type="molecule type" value="mRNA"/>
</dbReference>
<dbReference type="EMBL" id="D86744">
    <property type="protein sequence ID" value="BAA20071.1"/>
    <property type="molecule type" value="Genomic_DNA"/>
</dbReference>
<dbReference type="EMBL" id="AL662969">
    <property type="protein sequence ID" value="CAE04729.1"/>
    <property type="molecule type" value="Genomic_DNA"/>
</dbReference>
<dbReference type="EMBL" id="AP008210">
    <property type="protein sequence ID" value="BAF15184.1"/>
    <property type="molecule type" value="Genomic_DNA"/>
</dbReference>
<dbReference type="EMBL" id="AP014960">
    <property type="protein sequence ID" value="BAS90009.1"/>
    <property type="molecule type" value="Genomic_DNA"/>
</dbReference>
<dbReference type="EMBL" id="CM000141">
    <property type="protein sequence ID" value="EAZ31298.1"/>
    <property type="molecule type" value="Genomic_DNA"/>
</dbReference>
<dbReference type="PIR" id="JC5445">
    <property type="entry name" value="JC5445"/>
</dbReference>
<dbReference type="SMR" id="P55142"/>
<dbReference type="FunCoup" id="P55142">
    <property type="interactions" value="1417"/>
</dbReference>
<dbReference type="STRING" id="39947.P55142"/>
<dbReference type="PaxDb" id="39947-P55142"/>
<dbReference type="EnsemblPlants" id="Os04t0508300-01">
    <property type="protein sequence ID" value="Os04t0508300-01"/>
    <property type="gene ID" value="Os04g0508300"/>
</dbReference>
<dbReference type="Gramene" id="Os04t0508300-01">
    <property type="protein sequence ID" value="Os04t0508300-01"/>
    <property type="gene ID" value="Os04g0508300"/>
</dbReference>
<dbReference type="KEGG" id="dosa:Os04g0508300"/>
<dbReference type="eggNOG" id="KOG1752">
    <property type="taxonomic scope" value="Eukaryota"/>
</dbReference>
<dbReference type="HOGENOM" id="CLU_026126_7_2_1"/>
<dbReference type="InParanoid" id="P55142"/>
<dbReference type="OMA" id="IEIYTWS"/>
<dbReference type="SABIO-RK" id="P55142"/>
<dbReference type="Proteomes" id="UP000000763">
    <property type="component" value="Chromosome 4"/>
</dbReference>
<dbReference type="Proteomes" id="UP000007752">
    <property type="component" value="Chromosome 4"/>
</dbReference>
<dbReference type="Proteomes" id="UP000059680">
    <property type="component" value="Chromosome 4"/>
</dbReference>
<dbReference type="GO" id="GO:0005737">
    <property type="term" value="C:cytoplasm"/>
    <property type="evidence" value="ECO:0000318"/>
    <property type="project" value="GO_Central"/>
</dbReference>
<dbReference type="GO" id="GO:0015038">
    <property type="term" value="F:glutathione disulfide oxidoreductase activity"/>
    <property type="evidence" value="ECO:0000318"/>
    <property type="project" value="GO_Central"/>
</dbReference>
<dbReference type="GO" id="GO:0034599">
    <property type="term" value="P:cellular response to oxidative stress"/>
    <property type="evidence" value="ECO:0000318"/>
    <property type="project" value="GO_Central"/>
</dbReference>
<dbReference type="CDD" id="cd03419">
    <property type="entry name" value="GRX_GRXh_1_2_like"/>
    <property type="match status" value="1"/>
</dbReference>
<dbReference type="FunFam" id="3.40.30.10:FF:000093">
    <property type="entry name" value="Glutaredoxin 2"/>
    <property type="match status" value="1"/>
</dbReference>
<dbReference type="Gene3D" id="3.40.30.10">
    <property type="entry name" value="Glutaredoxin"/>
    <property type="match status" value="1"/>
</dbReference>
<dbReference type="InterPro" id="IPR011767">
    <property type="entry name" value="GLR_AS"/>
</dbReference>
<dbReference type="InterPro" id="IPR002109">
    <property type="entry name" value="Glutaredoxin"/>
</dbReference>
<dbReference type="InterPro" id="IPR011899">
    <property type="entry name" value="Glutaredoxin_euk/vir"/>
</dbReference>
<dbReference type="InterPro" id="IPR014025">
    <property type="entry name" value="Glutaredoxin_subgr"/>
</dbReference>
<dbReference type="InterPro" id="IPR036249">
    <property type="entry name" value="Thioredoxin-like_sf"/>
</dbReference>
<dbReference type="NCBIfam" id="TIGR02180">
    <property type="entry name" value="GRX_euk"/>
    <property type="match status" value="1"/>
</dbReference>
<dbReference type="PANTHER" id="PTHR45694">
    <property type="entry name" value="GLUTAREDOXIN 2"/>
    <property type="match status" value="1"/>
</dbReference>
<dbReference type="PANTHER" id="PTHR45694:SF11">
    <property type="entry name" value="GLUTAREDOXIN-C6"/>
    <property type="match status" value="1"/>
</dbReference>
<dbReference type="Pfam" id="PF00462">
    <property type="entry name" value="Glutaredoxin"/>
    <property type="match status" value="1"/>
</dbReference>
<dbReference type="PRINTS" id="PR00160">
    <property type="entry name" value="GLUTAREDOXIN"/>
</dbReference>
<dbReference type="SUPFAM" id="SSF52833">
    <property type="entry name" value="Thioredoxin-like"/>
    <property type="match status" value="1"/>
</dbReference>
<dbReference type="PROSITE" id="PS00195">
    <property type="entry name" value="GLUTAREDOXIN_1"/>
    <property type="match status" value="1"/>
</dbReference>
<dbReference type="PROSITE" id="PS51354">
    <property type="entry name" value="GLUTAREDOXIN_2"/>
    <property type="match status" value="1"/>
</dbReference>
<evidence type="ECO:0000250" key="1"/>
<evidence type="ECO:0000255" key="2">
    <source>
        <dbReference type="PROSITE-ProRule" id="PRU00686"/>
    </source>
</evidence>
<evidence type="ECO:0000269" key="3">
    <source>
    </source>
</evidence>
<evidence type="ECO:0000269" key="4">
    <source>
    </source>
</evidence>
<evidence type="ECO:0000305" key="5"/>
<evidence type="ECO:0000312" key="6">
    <source>
        <dbReference type="EMBL" id="EAZ31298.1"/>
    </source>
</evidence>
<proteinExistence type="evidence at protein level"/>
<gene>
    <name type="primary">GRXC6</name>
    <name type="synonym">RASC8</name>
    <name type="ordered locus">Os04g0508300</name>
    <name type="ordered locus">LOC_Os04g42930</name>
    <name evidence="6" type="ORF">OsJ_15409</name>
    <name type="ORF">OSJNBa0043L24.17</name>
</gene>
<comment type="function">
    <text evidence="3 4">Has a glutathione-disulfide oxidoreductase activity in the presence of NADPH and glutathione reductase. Reduces low molecular weight disulfides and proteins. Possesses thioltransferase, dehydroascorbate reductase and GSH-dependent peroxidase activities in vitro.</text>
</comment>
<comment type="biophysicochemical properties">
    <kinetics>
        <KM evidence="3">0.58 mM for H(2)O(2)</KM>
        <KM evidence="3">0.29 mM for cumene hydroperoxide</KM>
        <KM evidence="3">0.31 mM for tert-butyl hydroperoxide</KM>
        <Vmax evidence="3">62.5 umol/min/mg enzyme for H(2)O(2)</Vmax>
        <Vmax evidence="3">38.5 umol/min/mg enzyme for cumene hydroperoxide</Vmax>
        <Vmax evidence="3">16.8 umol/min/mg enzyme for tert-butyl hydroperoxide</Vmax>
        <text>The highest catalytic efficiency is observed with cumene hydroperoxide as substrate.</text>
    </kinetics>
</comment>
<comment type="subcellular location">
    <subcellularLocation>
        <location evidence="1">Cytoplasm</location>
    </subcellularLocation>
</comment>
<comment type="tissue specificity">
    <text evidence="4">Expressed in aleurone layer.</text>
</comment>
<comment type="PTM">
    <text>The N-terminus is blocked.</text>
</comment>
<comment type="miscellaneous">
    <text>The mutagenesis of Cys-26 into a serine residue does not affect thioltransferase and GSH-dependent peroxidase activities.</text>
</comment>
<comment type="similarity">
    <text evidence="5">Belongs to the glutaredoxin family. CPYC subfamily.</text>
</comment>
<keyword id="KW-0963">Cytoplasm</keyword>
<keyword id="KW-0903">Direct protein sequencing</keyword>
<keyword id="KW-1015">Disulfide bond</keyword>
<keyword id="KW-0249">Electron transport</keyword>
<keyword id="KW-0676">Redox-active center</keyword>
<keyword id="KW-1185">Reference proteome</keyword>
<keyword id="KW-0813">Transport</keyword>
<protein>
    <recommendedName>
        <fullName>Glutaredoxin-C6</fullName>
    </recommendedName>
    <alternativeName>
        <fullName>Glutaredoxin-C2 homolog 1</fullName>
    </alternativeName>
</protein>